<accession>O35608</accession>
<accession>Q3U1A1</accession>
<accession>Q9D2D2</accession>
<gene>
    <name type="primary">Angpt2</name>
    <name type="synonym">Agpt2</name>
</gene>
<proteinExistence type="evidence at protein level"/>
<dbReference type="EMBL" id="AF004326">
    <property type="protein sequence ID" value="AAB63189.1"/>
    <property type="molecule type" value="mRNA"/>
</dbReference>
<dbReference type="EMBL" id="AK019860">
    <property type="protein sequence ID" value="BAB31887.1"/>
    <property type="molecule type" value="mRNA"/>
</dbReference>
<dbReference type="EMBL" id="AK048622">
    <property type="protein sequence ID" value="BAC33396.1"/>
    <property type="molecule type" value="mRNA"/>
</dbReference>
<dbReference type="EMBL" id="AK156132">
    <property type="protein sequence ID" value="BAE33599.1"/>
    <property type="molecule type" value="mRNA"/>
</dbReference>
<dbReference type="EMBL" id="BC027216">
    <property type="protein sequence ID" value="AAH27216.1"/>
    <property type="molecule type" value="mRNA"/>
</dbReference>
<dbReference type="CCDS" id="CCDS22125.1"/>
<dbReference type="RefSeq" id="NP_031452.2">
    <property type="nucleotide sequence ID" value="NM_007426.4"/>
</dbReference>
<dbReference type="SMR" id="O35608"/>
<dbReference type="CORUM" id="O35608"/>
<dbReference type="FunCoup" id="O35608">
    <property type="interactions" value="866"/>
</dbReference>
<dbReference type="IntAct" id="O35608">
    <property type="interactions" value="1"/>
</dbReference>
<dbReference type="STRING" id="10090.ENSMUSP00000033846"/>
<dbReference type="GlyCosmos" id="O35608">
    <property type="glycosylation" value="6 sites, No reported glycans"/>
</dbReference>
<dbReference type="GlyGen" id="O35608">
    <property type="glycosylation" value="6 sites, 1 N-linked glycan (3 sites)"/>
</dbReference>
<dbReference type="iPTMnet" id="O35608"/>
<dbReference type="MetOSite" id="O35608"/>
<dbReference type="PhosphoSitePlus" id="O35608"/>
<dbReference type="PaxDb" id="10090-ENSMUSP00000033846"/>
<dbReference type="ProteomicsDB" id="296293"/>
<dbReference type="ABCD" id="O35608">
    <property type="antibodies" value="86 sequenced antibodies"/>
</dbReference>
<dbReference type="Antibodypedia" id="4319">
    <property type="antibodies" value="874 antibodies from 42 providers"/>
</dbReference>
<dbReference type="DNASU" id="11601"/>
<dbReference type="Ensembl" id="ENSMUST00000033846.7">
    <property type="protein sequence ID" value="ENSMUSP00000033846.6"/>
    <property type="gene ID" value="ENSMUSG00000031465.7"/>
</dbReference>
<dbReference type="GeneID" id="11601"/>
<dbReference type="KEGG" id="mmu:11601"/>
<dbReference type="UCSC" id="uc009kzu.2">
    <property type="organism name" value="mouse"/>
</dbReference>
<dbReference type="AGR" id="MGI:1202890"/>
<dbReference type="CTD" id="285"/>
<dbReference type="MGI" id="MGI:1202890">
    <property type="gene designation" value="Angpt2"/>
</dbReference>
<dbReference type="VEuPathDB" id="HostDB:ENSMUSG00000031465"/>
<dbReference type="eggNOG" id="KOG2579">
    <property type="taxonomic scope" value="Eukaryota"/>
</dbReference>
<dbReference type="GeneTree" id="ENSGT00940000158430"/>
<dbReference type="HOGENOM" id="CLU_038628_3_1_1"/>
<dbReference type="InParanoid" id="O35608"/>
<dbReference type="OMA" id="YYWKGAG"/>
<dbReference type="OrthoDB" id="7735366at2759"/>
<dbReference type="PhylomeDB" id="O35608"/>
<dbReference type="TreeFam" id="TF336658"/>
<dbReference type="Reactome" id="R-MMU-210993">
    <property type="pathway name" value="Tie2 Signaling"/>
</dbReference>
<dbReference type="BioGRID-ORCS" id="11601">
    <property type="hits" value="1 hit in 82 CRISPR screens"/>
</dbReference>
<dbReference type="PRO" id="PR:O35608"/>
<dbReference type="Proteomes" id="UP000000589">
    <property type="component" value="Chromosome 8"/>
</dbReference>
<dbReference type="RNAct" id="O35608">
    <property type="molecule type" value="protein"/>
</dbReference>
<dbReference type="Bgee" id="ENSMUSG00000031465">
    <property type="expression patterns" value="Expressed in gastrula and 179 other cell types or tissues"/>
</dbReference>
<dbReference type="ExpressionAtlas" id="O35608">
    <property type="expression patterns" value="baseline and differential"/>
</dbReference>
<dbReference type="GO" id="GO:0042995">
    <property type="term" value="C:cell projection"/>
    <property type="evidence" value="ECO:0007669"/>
    <property type="project" value="Ensembl"/>
</dbReference>
<dbReference type="GO" id="GO:0005615">
    <property type="term" value="C:extracellular space"/>
    <property type="evidence" value="ECO:0007005"/>
    <property type="project" value="BHF-UCL"/>
</dbReference>
<dbReference type="GO" id="GO:0046872">
    <property type="term" value="F:metal ion binding"/>
    <property type="evidence" value="ECO:0007669"/>
    <property type="project" value="UniProtKB-KW"/>
</dbReference>
<dbReference type="GO" id="GO:0048019">
    <property type="term" value="F:receptor antagonist activity"/>
    <property type="evidence" value="ECO:0000304"/>
    <property type="project" value="MGI"/>
</dbReference>
<dbReference type="GO" id="GO:0048018">
    <property type="term" value="F:receptor ligand activity"/>
    <property type="evidence" value="ECO:0007669"/>
    <property type="project" value="Ensembl"/>
</dbReference>
<dbReference type="GO" id="GO:0030971">
    <property type="term" value="F:receptor tyrosine kinase binding"/>
    <property type="evidence" value="ECO:0007669"/>
    <property type="project" value="Ensembl"/>
</dbReference>
<dbReference type="GO" id="GO:0005172">
    <property type="term" value="F:vascular endothelial growth factor receptor binding"/>
    <property type="evidence" value="ECO:0000304"/>
    <property type="project" value="MGI"/>
</dbReference>
<dbReference type="GO" id="GO:0001525">
    <property type="term" value="P:angiogenesis"/>
    <property type="evidence" value="ECO:0000316"/>
    <property type="project" value="MGI"/>
</dbReference>
<dbReference type="GO" id="GO:0031100">
    <property type="term" value="P:animal organ regeneration"/>
    <property type="evidence" value="ECO:0007669"/>
    <property type="project" value="Ensembl"/>
</dbReference>
<dbReference type="GO" id="GO:0007596">
    <property type="term" value="P:blood coagulation"/>
    <property type="evidence" value="ECO:0007669"/>
    <property type="project" value="InterPro"/>
</dbReference>
<dbReference type="GO" id="GO:0048514">
    <property type="term" value="P:blood vessel morphogenesis"/>
    <property type="evidence" value="ECO:0000315"/>
    <property type="project" value="MGI"/>
</dbReference>
<dbReference type="GO" id="GO:0001974">
    <property type="term" value="P:blood vessel remodeling"/>
    <property type="evidence" value="ECO:0000304"/>
    <property type="project" value="DFLAT"/>
</dbReference>
<dbReference type="GO" id="GO:0007169">
    <property type="term" value="P:cell surface receptor protein tyrosine kinase signaling pathway"/>
    <property type="evidence" value="ECO:0000304"/>
    <property type="project" value="MGI"/>
</dbReference>
<dbReference type="GO" id="GO:0071363">
    <property type="term" value="P:cellular response to growth factor stimulus"/>
    <property type="evidence" value="ECO:0007669"/>
    <property type="project" value="Ensembl"/>
</dbReference>
<dbReference type="GO" id="GO:0007492">
    <property type="term" value="P:endoderm development"/>
    <property type="evidence" value="ECO:0000304"/>
    <property type="project" value="MGI"/>
</dbReference>
<dbReference type="GO" id="GO:0010467">
    <property type="term" value="P:gene expression"/>
    <property type="evidence" value="ECO:0000266"/>
    <property type="project" value="MGI"/>
</dbReference>
<dbReference type="GO" id="GO:0007281">
    <property type="term" value="P:germ cell development"/>
    <property type="evidence" value="ECO:0007669"/>
    <property type="project" value="Ensembl"/>
</dbReference>
<dbReference type="GO" id="GO:0072012">
    <property type="term" value="P:glomerulus vasculature development"/>
    <property type="evidence" value="ECO:0007669"/>
    <property type="project" value="Ensembl"/>
</dbReference>
<dbReference type="GO" id="GO:0030097">
    <property type="term" value="P:hemopoiesis"/>
    <property type="evidence" value="ECO:0000304"/>
    <property type="project" value="DFLAT"/>
</dbReference>
<dbReference type="GO" id="GO:0060135">
    <property type="term" value="P:maternal process involved in female pregnancy"/>
    <property type="evidence" value="ECO:0007669"/>
    <property type="project" value="Ensembl"/>
</dbReference>
<dbReference type="GO" id="GO:0016525">
    <property type="term" value="P:negative regulation of angiogenesis"/>
    <property type="evidence" value="ECO:0000314"/>
    <property type="project" value="MGI"/>
</dbReference>
<dbReference type="GO" id="GO:0043537">
    <property type="term" value="P:negative regulation of blood vessel endothelial cell migration"/>
    <property type="evidence" value="ECO:0007669"/>
    <property type="project" value="Ensembl"/>
</dbReference>
<dbReference type="GO" id="GO:0010812">
    <property type="term" value="P:negative regulation of cell-substrate adhesion"/>
    <property type="evidence" value="ECO:0000314"/>
    <property type="project" value="MGI"/>
</dbReference>
<dbReference type="GO" id="GO:0050928">
    <property type="term" value="P:negative regulation of positive chemotaxis"/>
    <property type="evidence" value="ECO:0007669"/>
    <property type="project" value="Ensembl"/>
</dbReference>
<dbReference type="GO" id="GO:0045766">
    <property type="term" value="P:positive regulation of angiogenesis"/>
    <property type="evidence" value="ECO:0007669"/>
    <property type="project" value="Ensembl"/>
</dbReference>
<dbReference type="GO" id="GO:0050820">
    <property type="term" value="P:positive regulation of coagulation"/>
    <property type="evidence" value="ECO:0007669"/>
    <property type="project" value="Ensembl"/>
</dbReference>
<dbReference type="GO" id="GO:0045765">
    <property type="term" value="P:regulation of angiogenesis"/>
    <property type="evidence" value="ECO:0000304"/>
    <property type="project" value="DFLAT"/>
</dbReference>
<dbReference type="GO" id="GO:0014823">
    <property type="term" value="P:response to activity"/>
    <property type="evidence" value="ECO:0007669"/>
    <property type="project" value="Ensembl"/>
</dbReference>
<dbReference type="GO" id="GO:0009749">
    <property type="term" value="P:response to glucose"/>
    <property type="evidence" value="ECO:0007669"/>
    <property type="project" value="Ensembl"/>
</dbReference>
<dbReference type="GO" id="GO:0001666">
    <property type="term" value="P:response to hypoxia"/>
    <property type="evidence" value="ECO:0007669"/>
    <property type="project" value="Ensembl"/>
</dbReference>
<dbReference type="GO" id="GO:0009612">
    <property type="term" value="P:response to mechanical stimulus"/>
    <property type="evidence" value="ECO:0007669"/>
    <property type="project" value="Ensembl"/>
</dbReference>
<dbReference type="GO" id="GO:0048014">
    <property type="term" value="P:Tie signaling pathway"/>
    <property type="evidence" value="ECO:0000304"/>
    <property type="project" value="DFLAT"/>
</dbReference>
<dbReference type="CDD" id="cd00087">
    <property type="entry name" value="FReD"/>
    <property type="match status" value="1"/>
</dbReference>
<dbReference type="FunFam" id="4.10.530.10:FF:000001">
    <property type="entry name" value="angiopoietin-2 isoform X1"/>
    <property type="match status" value="1"/>
</dbReference>
<dbReference type="FunFam" id="3.90.215.10:FF:000001">
    <property type="entry name" value="Tenascin isoform 1"/>
    <property type="match status" value="1"/>
</dbReference>
<dbReference type="Gene3D" id="3.90.215.10">
    <property type="entry name" value="Gamma Fibrinogen, chain A, domain 1"/>
    <property type="match status" value="1"/>
</dbReference>
<dbReference type="Gene3D" id="4.10.530.10">
    <property type="entry name" value="Gamma-fibrinogen Carboxyl Terminal Fragment, domain 2"/>
    <property type="match status" value="1"/>
</dbReference>
<dbReference type="InterPro" id="IPR037579">
    <property type="entry name" value="FIB_ANG-like"/>
</dbReference>
<dbReference type="InterPro" id="IPR036056">
    <property type="entry name" value="Fibrinogen-like_C"/>
</dbReference>
<dbReference type="InterPro" id="IPR014716">
    <property type="entry name" value="Fibrinogen_a/b/g_C_1"/>
</dbReference>
<dbReference type="InterPro" id="IPR002181">
    <property type="entry name" value="Fibrinogen_a/b/g_C_dom"/>
</dbReference>
<dbReference type="InterPro" id="IPR020837">
    <property type="entry name" value="Fibrinogen_CS"/>
</dbReference>
<dbReference type="NCBIfam" id="NF040941">
    <property type="entry name" value="GGGWT_bact"/>
    <property type="match status" value="1"/>
</dbReference>
<dbReference type="PANTHER" id="PTHR47221">
    <property type="entry name" value="FIBRINOGEN ALPHA CHAIN"/>
    <property type="match status" value="1"/>
</dbReference>
<dbReference type="PANTHER" id="PTHR47221:SF6">
    <property type="entry name" value="FIBRINOGEN ALPHA CHAIN"/>
    <property type="match status" value="1"/>
</dbReference>
<dbReference type="Pfam" id="PF25443">
    <property type="entry name" value="ANG-1"/>
    <property type="match status" value="1"/>
</dbReference>
<dbReference type="Pfam" id="PF00147">
    <property type="entry name" value="Fibrinogen_C"/>
    <property type="match status" value="1"/>
</dbReference>
<dbReference type="SMART" id="SM00186">
    <property type="entry name" value="FBG"/>
    <property type="match status" value="1"/>
</dbReference>
<dbReference type="SUPFAM" id="SSF56496">
    <property type="entry name" value="Fibrinogen C-terminal domain-like"/>
    <property type="match status" value="1"/>
</dbReference>
<dbReference type="PROSITE" id="PS00514">
    <property type="entry name" value="FIBRINOGEN_C_1"/>
    <property type="match status" value="1"/>
</dbReference>
<dbReference type="PROSITE" id="PS51406">
    <property type="entry name" value="FIBRINOGEN_C_2"/>
    <property type="match status" value="1"/>
</dbReference>
<comment type="function">
    <text evidence="2 5 6">Binds to TEK/TIE2, competing for the ANGPT1 binding site, and modulating ANGPT1 signaling (By similarity). Can induce tyrosine phosphorylation of TEK/TIE2 in the absence of ANGPT1 (By similarity). In the absence of angiogenic inducers, such as VEGF, ANGPT2-mediated loosening of cell-matrix contacts may induce endothelial cell apoptosis with consequent vascular regression (By similarity). In concert with VEGF, it may facilitate endothelial cell migration and proliferation, thus serving as a permissive angiogenic signal (By similarity). Involved in the regulation of lymphangiogenesis (PubMed:28179430, PubMed:32908006).</text>
</comment>
<comment type="subunit">
    <text evidence="2 5">Interacts with TEK/TIE2, competing for the same binding site as ANGPT1 (By similarity). Interacts with ITGA5 (By similarity). Interacts with SVEP1/polydom (PubMed:28179430). Interacts with THBD; this interaction significantly inhibits the generation of activated PC and TAFIa/CPB2 by the thrombin/thrombomodulin complex (By similarity).</text>
</comment>
<comment type="subcellular location">
    <subcellularLocation>
        <location evidence="2">Secreted</location>
    </subcellularLocation>
</comment>
<comment type="tissue specificity">
    <text evidence="7">Expressed in the ovary, uterus and placenta.</text>
</comment>
<comment type="domain">
    <text evidence="1">The Fibrinogen C-terminal domain mediates interaction with the TEK/TIE2 receptor.</text>
</comment>
<evidence type="ECO:0000250" key="1"/>
<evidence type="ECO:0000250" key="2">
    <source>
        <dbReference type="UniProtKB" id="O15123"/>
    </source>
</evidence>
<evidence type="ECO:0000255" key="3"/>
<evidence type="ECO:0000255" key="4">
    <source>
        <dbReference type="PROSITE-ProRule" id="PRU00739"/>
    </source>
</evidence>
<evidence type="ECO:0000269" key="5">
    <source>
    </source>
</evidence>
<evidence type="ECO:0000269" key="6">
    <source>
    </source>
</evidence>
<evidence type="ECO:0000269" key="7">
    <source>
    </source>
</evidence>
<evidence type="ECO:0000305" key="8"/>
<keyword id="KW-0037">Angiogenesis</keyword>
<keyword id="KW-0106">Calcium</keyword>
<keyword id="KW-0175">Coiled coil</keyword>
<keyword id="KW-0217">Developmental protein</keyword>
<keyword id="KW-0221">Differentiation</keyword>
<keyword id="KW-1015">Disulfide bond</keyword>
<keyword id="KW-0325">Glycoprotein</keyword>
<keyword id="KW-0479">Metal-binding</keyword>
<keyword id="KW-1185">Reference proteome</keyword>
<keyword id="KW-0964">Secreted</keyword>
<keyword id="KW-0732">Signal</keyword>
<name>ANGP2_MOUSE</name>
<protein>
    <recommendedName>
        <fullName>Angiopoietin-2</fullName>
        <shortName>ANG-2</shortName>
    </recommendedName>
</protein>
<organism>
    <name type="scientific">Mus musculus</name>
    <name type="common">Mouse</name>
    <dbReference type="NCBI Taxonomy" id="10090"/>
    <lineage>
        <taxon>Eukaryota</taxon>
        <taxon>Metazoa</taxon>
        <taxon>Chordata</taxon>
        <taxon>Craniata</taxon>
        <taxon>Vertebrata</taxon>
        <taxon>Euteleostomi</taxon>
        <taxon>Mammalia</taxon>
        <taxon>Eutheria</taxon>
        <taxon>Euarchontoglires</taxon>
        <taxon>Glires</taxon>
        <taxon>Rodentia</taxon>
        <taxon>Myomorpha</taxon>
        <taxon>Muroidea</taxon>
        <taxon>Muridae</taxon>
        <taxon>Murinae</taxon>
        <taxon>Mus</taxon>
        <taxon>Mus</taxon>
    </lineage>
</organism>
<sequence length="496" mass="56576">MWQIIFLTFGWDLVLASAYSNFRKSVDSTGRRQYQVQNGPCSYTFLLPETDSCRSSSSPYMSNAVQRDAPLDYDDSVQRLQVLENILENNTQWLMKLENYIQDNMKKEMVEIQQNVVQNQTAVMIEIGTSLLNQTAAQTRKLTDVEAQVLNQTTRLELQLLQHSISTNKLEKQILDQTSEINKLQNKNSFLEQKVLDMEGKHSEQLQSMKEQKDELQVLVSKQSSVIDELEKKLVTATVNNSLLQKQQHDLMETVNSLLTMMSSPNSKSSVAIRKEEQTTFRDCAEIFKSGLTTSGIYTLTFPNSTEEIKAYCDMDVGGGGWTVIQHREDGSVDFQRTWKEYKEGFGSPLGEYWLGNEFVSQLTGQHRYVLKIQLKDWEGNEAHSLYDHFYLAGEESNYRIHLTGLTGTAGKISSISQPGSDFSTKDSDNDKCICKCSQMLSGGWWFDACGPSNLNGQYYPQKQNTNKFNGIKWYYWKGSGYSLKATTMMIRPADF</sequence>
<feature type="signal peptide" evidence="3">
    <location>
        <begin position="1"/>
        <end position="18"/>
    </location>
</feature>
<feature type="chain" id="PRO_0000009114" description="Angiopoietin-2">
    <location>
        <begin position="19"/>
        <end position="496"/>
    </location>
</feature>
<feature type="domain" description="Fibrinogen C-terminal" evidence="4">
    <location>
        <begin position="275"/>
        <end position="495"/>
    </location>
</feature>
<feature type="coiled-coil region" evidence="3">
    <location>
        <begin position="159"/>
        <end position="256"/>
    </location>
</feature>
<feature type="binding site" evidence="2">
    <location>
        <position position="429"/>
    </location>
    <ligand>
        <name>Ca(2+)</name>
        <dbReference type="ChEBI" id="CHEBI:29108"/>
    </ligand>
</feature>
<feature type="binding site" evidence="2">
    <location>
        <position position="431"/>
    </location>
    <ligand>
        <name>Ca(2+)</name>
        <dbReference type="ChEBI" id="CHEBI:29108"/>
    </ligand>
</feature>
<feature type="binding site" evidence="2">
    <location>
        <position position="433"/>
    </location>
    <ligand>
        <name>Ca(2+)</name>
        <dbReference type="ChEBI" id="CHEBI:29108"/>
    </ligand>
</feature>
<feature type="binding site" evidence="2">
    <location>
        <position position="435"/>
    </location>
    <ligand>
        <name>Ca(2+)</name>
        <dbReference type="ChEBI" id="CHEBI:29108"/>
    </ligand>
</feature>
<feature type="glycosylation site" description="N-linked (GlcNAc...) asparagine" evidence="3">
    <location>
        <position position="89"/>
    </location>
</feature>
<feature type="glycosylation site" description="N-linked (GlcNAc...) asparagine" evidence="3">
    <location>
        <position position="119"/>
    </location>
</feature>
<feature type="glycosylation site" description="N-linked (GlcNAc...) asparagine" evidence="3">
    <location>
        <position position="133"/>
    </location>
</feature>
<feature type="glycosylation site" description="N-linked (GlcNAc...) asparagine" evidence="3">
    <location>
        <position position="151"/>
    </location>
</feature>
<feature type="glycosylation site" description="N-linked (GlcNAc...) asparagine" evidence="3">
    <location>
        <position position="240"/>
    </location>
</feature>
<feature type="glycosylation site" description="N-linked (GlcNAc...) asparagine" evidence="3">
    <location>
        <position position="304"/>
    </location>
</feature>
<feature type="disulfide bond" evidence="4">
    <location>
        <begin position="284"/>
        <end position="313"/>
    </location>
</feature>
<feature type="disulfide bond" evidence="4">
    <location>
        <begin position="433"/>
        <end position="435"/>
    </location>
</feature>
<feature type="disulfide bond" evidence="4">
    <location>
        <begin position="437"/>
        <end position="450"/>
    </location>
</feature>
<feature type="sequence conflict" description="In Ref. 1; AAB63189." evidence="8" ref="1">
    <original>S</original>
    <variation>N</variation>
    <location>
        <position position="348"/>
    </location>
</feature>
<feature type="sequence conflict" description="In Ref. 1; AAB63189." evidence="8" ref="1">
    <original>G</original>
    <variation>A</variation>
    <location>
        <position position="411"/>
    </location>
</feature>
<reference key="1">
    <citation type="journal article" date="1997" name="Science">
        <title>Angiopoietin-2, a natural antagonist for Tie2 that disrupts in vivo angiogenesis.</title>
        <authorList>
            <person name="Maisonpierre P.C."/>
            <person name="Suri C."/>
            <person name="Jones P.F."/>
            <person name="Bartunkova S."/>
            <person name="Wiegand S.J."/>
            <person name="Radziejewski C."/>
            <person name="Compton D.L."/>
            <person name="McClain J."/>
            <person name="Aldrich T.H."/>
            <person name="Papadopoulos N."/>
            <person name="Daly T.J."/>
            <person name="Davis S."/>
            <person name="Sato T.N."/>
            <person name="Yancopoulos G.D."/>
        </authorList>
    </citation>
    <scope>NUCLEOTIDE SEQUENCE [MRNA]</scope>
    <scope>TISSUE SPECIFICITY</scope>
    <source>
        <tissue>Uterus</tissue>
    </source>
</reference>
<reference key="2">
    <citation type="journal article" date="2005" name="Science">
        <title>The transcriptional landscape of the mammalian genome.</title>
        <authorList>
            <person name="Carninci P."/>
            <person name="Kasukawa T."/>
            <person name="Katayama S."/>
            <person name="Gough J."/>
            <person name="Frith M.C."/>
            <person name="Maeda N."/>
            <person name="Oyama R."/>
            <person name="Ravasi T."/>
            <person name="Lenhard B."/>
            <person name="Wells C."/>
            <person name="Kodzius R."/>
            <person name="Shimokawa K."/>
            <person name="Bajic V.B."/>
            <person name="Brenner S.E."/>
            <person name="Batalov S."/>
            <person name="Forrest A.R."/>
            <person name="Zavolan M."/>
            <person name="Davis M.J."/>
            <person name="Wilming L.G."/>
            <person name="Aidinis V."/>
            <person name="Allen J.E."/>
            <person name="Ambesi-Impiombato A."/>
            <person name="Apweiler R."/>
            <person name="Aturaliya R.N."/>
            <person name="Bailey T.L."/>
            <person name="Bansal M."/>
            <person name="Baxter L."/>
            <person name="Beisel K.W."/>
            <person name="Bersano T."/>
            <person name="Bono H."/>
            <person name="Chalk A.M."/>
            <person name="Chiu K.P."/>
            <person name="Choudhary V."/>
            <person name="Christoffels A."/>
            <person name="Clutterbuck D.R."/>
            <person name="Crowe M.L."/>
            <person name="Dalla E."/>
            <person name="Dalrymple B.P."/>
            <person name="de Bono B."/>
            <person name="Della Gatta G."/>
            <person name="di Bernardo D."/>
            <person name="Down T."/>
            <person name="Engstrom P."/>
            <person name="Fagiolini M."/>
            <person name="Faulkner G."/>
            <person name="Fletcher C.F."/>
            <person name="Fukushima T."/>
            <person name="Furuno M."/>
            <person name="Futaki S."/>
            <person name="Gariboldi M."/>
            <person name="Georgii-Hemming P."/>
            <person name="Gingeras T.R."/>
            <person name="Gojobori T."/>
            <person name="Green R.E."/>
            <person name="Gustincich S."/>
            <person name="Harbers M."/>
            <person name="Hayashi Y."/>
            <person name="Hensch T.K."/>
            <person name="Hirokawa N."/>
            <person name="Hill D."/>
            <person name="Huminiecki L."/>
            <person name="Iacono M."/>
            <person name="Ikeo K."/>
            <person name="Iwama A."/>
            <person name="Ishikawa T."/>
            <person name="Jakt M."/>
            <person name="Kanapin A."/>
            <person name="Katoh M."/>
            <person name="Kawasawa Y."/>
            <person name="Kelso J."/>
            <person name="Kitamura H."/>
            <person name="Kitano H."/>
            <person name="Kollias G."/>
            <person name="Krishnan S.P."/>
            <person name="Kruger A."/>
            <person name="Kummerfeld S.K."/>
            <person name="Kurochkin I.V."/>
            <person name="Lareau L.F."/>
            <person name="Lazarevic D."/>
            <person name="Lipovich L."/>
            <person name="Liu J."/>
            <person name="Liuni S."/>
            <person name="McWilliam S."/>
            <person name="Madan Babu M."/>
            <person name="Madera M."/>
            <person name="Marchionni L."/>
            <person name="Matsuda H."/>
            <person name="Matsuzawa S."/>
            <person name="Miki H."/>
            <person name="Mignone F."/>
            <person name="Miyake S."/>
            <person name="Morris K."/>
            <person name="Mottagui-Tabar S."/>
            <person name="Mulder N."/>
            <person name="Nakano N."/>
            <person name="Nakauchi H."/>
            <person name="Ng P."/>
            <person name="Nilsson R."/>
            <person name="Nishiguchi S."/>
            <person name="Nishikawa S."/>
            <person name="Nori F."/>
            <person name="Ohara O."/>
            <person name="Okazaki Y."/>
            <person name="Orlando V."/>
            <person name="Pang K.C."/>
            <person name="Pavan W.J."/>
            <person name="Pavesi G."/>
            <person name="Pesole G."/>
            <person name="Petrovsky N."/>
            <person name="Piazza S."/>
            <person name="Reed J."/>
            <person name="Reid J.F."/>
            <person name="Ring B.Z."/>
            <person name="Ringwald M."/>
            <person name="Rost B."/>
            <person name="Ruan Y."/>
            <person name="Salzberg S.L."/>
            <person name="Sandelin A."/>
            <person name="Schneider C."/>
            <person name="Schoenbach C."/>
            <person name="Sekiguchi K."/>
            <person name="Semple C.A."/>
            <person name="Seno S."/>
            <person name="Sessa L."/>
            <person name="Sheng Y."/>
            <person name="Shibata Y."/>
            <person name="Shimada H."/>
            <person name="Shimada K."/>
            <person name="Silva D."/>
            <person name="Sinclair B."/>
            <person name="Sperling S."/>
            <person name="Stupka E."/>
            <person name="Sugiura K."/>
            <person name="Sultana R."/>
            <person name="Takenaka Y."/>
            <person name="Taki K."/>
            <person name="Tammoja K."/>
            <person name="Tan S.L."/>
            <person name="Tang S."/>
            <person name="Taylor M.S."/>
            <person name="Tegner J."/>
            <person name="Teichmann S.A."/>
            <person name="Ueda H.R."/>
            <person name="van Nimwegen E."/>
            <person name="Verardo R."/>
            <person name="Wei C.L."/>
            <person name="Yagi K."/>
            <person name="Yamanishi H."/>
            <person name="Zabarovsky E."/>
            <person name="Zhu S."/>
            <person name="Zimmer A."/>
            <person name="Hide W."/>
            <person name="Bult C."/>
            <person name="Grimmond S.M."/>
            <person name="Teasdale R.D."/>
            <person name="Liu E.T."/>
            <person name="Brusic V."/>
            <person name="Quackenbush J."/>
            <person name="Wahlestedt C."/>
            <person name="Mattick J.S."/>
            <person name="Hume D.A."/>
            <person name="Kai C."/>
            <person name="Sasaki D."/>
            <person name="Tomaru Y."/>
            <person name="Fukuda S."/>
            <person name="Kanamori-Katayama M."/>
            <person name="Suzuki M."/>
            <person name="Aoki J."/>
            <person name="Arakawa T."/>
            <person name="Iida J."/>
            <person name="Imamura K."/>
            <person name="Itoh M."/>
            <person name="Kato T."/>
            <person name="Kawaji H."/>
            <person name="Kawagashira N."/>
            <person name="Kawashima T."/>
            <person name="Kojima M."/>
            <person name="Kondo S."/>
            <person name="Konno H."/>
            <person name="Nakano K."/>
            <person name="Ninomiya N."/>
            <person name="Nishio T."/>
            <person name="Okada M."/>
            <person name="Plessy C."/>
            <person name="Shibata K."/>
            <person name="Shiraki T."/>
            <person name="Suzuki S."/>
            <person name="Tagami M."/>
            <person name="Waki K."/>
            <person name="Watahiki A."/>
            <person name="Okamura-Oho Y."/>
            <person name="Suzuki H."/>
            <person name="Kawai J."/>
            <person name="Hayashizaki Y."/>
        </authorList>
    </citation>
    <scope>NUCLEOTIDE SEQUENCE [LARGE SCALE MRNA]</scope>
    <source>
        <strain>C57BL/6J</strain>
        <strain>NOD</strain>
        <tissue>Head</tissue>
        <tissue>Ovary</tissue>
        <tissue>Spleen</tissue>
        <tissue>Uterus</tissue>
    </source>
</reference>
<reference key="3">
    <citation type="journal article" date="2004" name="Genome Res.">
        <title>The status, quality, and expansion of the NIH full-length cDNA project: the Mammalian Gene Collection (MGC).</title>
        <authorList>
            <consortium name="The MGC Project Team"/>
        </authorList>
    </citation>
    <scope>NUCLEOTIDE SEQUENCE [LARGE SCALE MRNA]</scope>
</reference>
<reference key="4">
    <citation type="journal article" date="2017" name="Circ. Res.">
        <title>Polydom Is an Extracellular Matrix Protein Involved in Lymphatic Vessel Remodeling.</title>
        <authorList>
            <person name="Morooka N."/>
            <person name="Futaki S."/>
            <person name="Sato-Nishiuchi R."/>
            <person name="Nishino M."/>
            <person name="Totani Y."/>
            <person name="Shimono C."/>
            <person name="Nakano I."/>
            <person name="Nakajima H."/>
            <person name="Mochizuki N."/>
            <person name="Sekiguchi K."/>
        </authorList>
    </citation>
    <scope>FUNCTION</scope>
    <scope>INTERACTION WITH SVEP1</scope>
</reference>
<reference key="5">
    <citation type="journal article" date="2020" name="Sci. Transl. Med.">
        <title>Characterization of ANGPT2 mutations associated with primary lymphedema.</title>
        <authorList>
            <person name="Leppaenen V.M."/>
            <person name="Brouillard P."/>
            <person name="Korhonen E.A."/>
            <person name="Sipilae T."/>
            <person name="Jha S.K."/>
            <person name="Revencu N."/>
            <person name="Labarque V."/>
            <person name="Fastre E."/>
            <person name="Schloegel M."/>
            <person name="Ravoet M."/>
            <person name="Singer A."/>
            <person name="Luzzatto C."/>
            <person name="Angelone D."/>
            <person name="Crichiutti G."/>
            <person name="D'Elia A."/>
            <person name="Kuurne J."/>
            <person name="Elamaa H."/>
            <person name="Koh G.Y."/>
            <person name="Saharinen P."/>
            <person name="Vikkula M."/>
            <person name="Alitalo K."/>
        </authorList>
    </citation>
    <scope>FUNCTION</scope>
</reference>